<protein>
    <recommendedName>
        <fullName>Uncharacterized protein Mb0093</fullName>
    </recommendedName>
</protein>
<feature type="chain" id="PRO_0000103665" description="Uncharacterized protein Mb0093">
    <location>
        <begin position="1"/>
        <end position="256"/>
    </location>
</feature>
<feature type="transmembrane region" description="Helical" evidence="1">
    <location>
        <begin position="155"/>
        <end position="175"/>
    </location>
</feature>
<feature type="transmembrane region" description="Helical" evidence="1">
    <location>
        <begin position="203"/>
        <end position="223"/>
    </location>
</feature>
<evidence type="ECO:0000255" key="1"/>
<evidence type="ECO:0000305" key="2"/>
<organism>
    <name type="scientific">Mycobacterium bovis (strain ATCC BAA-935 / AF2122/97)</name>
    <dbReference type="NCBI Taxonomy" id="233413"/>
    <lineage>
        <taxon>Bacteria</taxon>
        <taxon>Bacillati</taxon>
        <taxon>Actinomycetota</taxon>
        <taxon>Actinomycetes</taxon>
        <taxon>Mycobacteriales</taxon>
        <taxon>Mycobacteriaceae</taxon>
        <taxon>Mycobacterium</taxon>
        <taxon>Mycobacterium tuberculosis complex</taxon>
    </lineage>
</organism>
<gene>
    <name type="ordered locus">BQ2027_MB0093</name>
</gene>
<sequence length="256" mass="27838">MAKNQNRIRNRWELITCGLGGHVTYAPDDAALAARLRASTGLGEVWRCLRCGDFALGGPQGRGAPEDAPLIMRGKALRQAIIIRALGVERLVRALVLALAAWAVWEFRGARGAIQATLDRDLPVLRAAGFKVDQMTVIHALEKALAAKPSTLALITGMLAAYAVLQAVEGVGLWLLKRWGEYFAVVATSIFLPLEVHDLAKGITTTRVVTFSINVAAVVYLLISKRLFGVRGGRKAYDVERRGEQLLDLERAAMLT</sequence>
<dbReference type="EMBL" id="LT708304">
    <property type="protein sequence ID" value="SIT98488.1"/>
    <property type="molecule type" value="Genomic_DNA"/>
</dbReference>
<dbReference type="RefSeq" id="NP_853761.1">
    <property type="nucleotide sequence ID" value="NC_002945.3"/>
</dbReference>
<dbReference type="RefSeq" id="WP_003899807.1">
    <property type="nucleotide sequence ID" value="NC_002945.4"/>
</dbReference>
<dbReference type="PATRIC" id="fig|233413.5.peg.105"/>
<dbReference type="Proteomes" id="UP000001419">
    <property type="component" value="Chromosome"/>
</dbReference>
<dbReference type="GO" id="GO:0005886">
    <property type="term" value="C:plasma membrane"/>
    <property type="evidence" value="ECO:0007669"/>
    <property type="project" value="UniProtKB-SubCell"/>
</dbReference>
<dbReference type="InterPro" id="IPR014511">
    <property type="entry name" value="DUF2068_TM_subgr"/>
</dbReference>
<dbReference type="InterPro" id="IPR021125">
    <property type="entry name" value="DUF2127"/>
</dbReference>
<dbReference type="Pfam" id="PF09900">
    <property type="entry name" value="DUF2127"/>
    <property type="match status" value="1"/>
</dbReference>
<dbReference type="PIRSF" id="PIRSF021485">
    <property type="entry name" value="UCP021485"/>
    <property type="match status" value="1"/>
</dbReference>
<comment type="subcellular location">
    <subcellularLocation>
        <location evidence="2">Cell membrane</location>
        <topology evidence="2">Multi-pass membrane protein</topology>
    </subcellularLocation>
</comment>
<accession>P64684</accession>
<accession>A0A1R3XUA3</accession>
<accession>Q10887</accession>
<accession>X2BE01</accession>
<keyword id="KW-1003">Cell membrane</keyword>
<keyword id="KW-0472">Membrane</keyword>
<keyword id="KW-1185">Reference proteome</keyword>
<keyword id="KW-0812">Transmembrane</keyword>
<keyword id="KW-1133">Transmembrane helix</keyword>
<proteinExistence type="predicted"/>
<name>Y093_MYCBO</name>
<reference key="1">
    <citation type="journal article" date="2003" name="Proc. Natl. Acad. Sci. U.S.A.">
        <title>The complete genome sequence of Mycobacterium bovis.</title>
        <authorList>
            <person name="Garnier T."/>
            <person name="Eiglmeier K."/>
            <person name="Camus J.-C."/>
            <person name="Medina N."/>
            <person name="Mansoor H."/>
            <person name="Pryor M."/>
            <person name="Duthoy S."/>
            <person name="Grondin S."/>
            <person name="Lacroix C."/>
            <person name="Monsempe C."/>
            <person name="Simon S."/>
            <person name="Harris B."/>
            <person name="Atkin R."/>
            <person name="Doggett J."/>
            <person name="Mayes R."/>
            <person name="Keating L."/>
            <person name="Wheeler P.R."/>
            <person name="Parkhill J."/>
            <person name="Barrell B.G."/>
            <person name="Cole S.T."/>
            <person name="Gordon S.V."/>
            <person name="Hewinson R.G."/>
        </authorList>
    </citation>
    <scope>NUCLEOTIDE SEQUENCE [LARGE SCALE GENOMIC DNA]</scope>
    <source>
        <strain>ATCC BAA-935 / AF2122/97</strain>
    </source>
</reference>
<reference key="2">
    <citation type="journal article" date="2017" name="Genome Announc.">
        <title>Updated reference genome sequence and annotation of Mycobacterium bovis AF2122/97.</title>
        <authorList>
            <person name="Malone K.M."/>
            <person name="Farrell D."/>
            <person name="Stuber T.P."/>
            <person name="Schubert O.T."/>
            <person name="Aebersold R."/>
            <person name="Robbe-Austerman S."/>
            <person name="Gordon S.V."/>
        </authorList>
    </citation>
    <scope>NUCLEOTIDE SEQUENCE [LARGE SCALE GENOMIC DNA]</scope>
    <scope>GENOME REANNOTATION</scope>
    <source>
        <strain>ATCC BAA-935 / AF2122/97</strain>
    </source>
</reference>